<keyword id="KW-0227">DNA damage</keyword>
<keyword id="KW-0233">DNA recombination</keyword>
<keyword id="KW-0234">DNA repair</keyword>
<keyword id="KW-0479">Metal-binding</keyword>
<keyword id="KW-0862">Zinc</keyword>
<keyword id="KW-0863">Zinc-finger</keyword>
<feature type="chain" id="PRO_1000201858" description="Recombination protein RecR">
    <location>
        <begin position="1"/>
        <end position="201"/>
    </location>
</feature>
<feature type="domain" description="Toprim" evidence="1">
    <location>
        <begin position="81"/>
        <end position="178"/>
    </location>
</feature>
<feature type="zinc finger region" description="C4-type" evidence="1">
    <location>
        <begin position="58"/>
        <end position="73"/>
    </location>
</feature>
<evidence type="ECO:0000255" key="1">
    <source>
        <dbReference type="HAMAP-Rule" id="MF_00017"/>
    </source>
</evidence>
<dbReference type="EMBL" id="CP001197">
    <property type="protein sequence ID" value="ACL09214.1"/>
    <property type="molecule type" value="Genomic_DNA"/>
</dbReference>
<dbReference type="SMR" id="B8DQU5"/>
<dbReference type="STRING" id="883.DvMF_2271"/>
<dbReference type="KEGG" id="dvm:DvMF_2271"/>
<dbReference type="eggNOG" id="COG0353">
    <property type="taxonomic scope" value="Bacteria"/>
</dbReference>
<dbReference type="HOGENOM" id="CLU_060739_1_1_7"/>
<dbReference type="OrthoDB" id="9802672at2"/>
<dbReference type="GO" id="GO:0003677">
    <property type="term" value="F:DNA binding"/>
    <property type="evidence" value="ECO:0007669"/>
    <property type="project" value="UniProtKB-UniRule"/>
</dbReference>
<dbReference type="GO" id="GO:0008270">
    <property type="term" value="F:zinc ion binding"/>
    <property type="evidence" value="ECO:0007669"/>
    <property type="project" value="UniProtKB-KW"/>
</dbReference>
<dbReference type="GO" id="GO:0006310">
    <property type="term" value="P:DNA recombination"/>
    <property type="evidence" value="ECO:0007669"/>
    <property type="project" value="UniProtKB-UniRule"/>
</dbReference>
<dbReference type="GO" id="GO:0006281">
    <property type="term" value="P:DNA repair"/>
    <property type="evidence" value="ECO:0007669"/>
    <property type="project" value="UniProtKB-UniRule"/>
</dbReference>
<dbReference type="CDD" id="cd01025">
    <property type="entry name" value="TOPRIM_recR"/>
    <property type="match status" value="1"/>
</dbReference>
<dbReference type="Gene3D" id="3.30.60.80">
    <property type="match status" value="1"/>
</dbReference>
<dbReference type="Gene3D" id="3.40.1360.10">
    <property type="match status" value="1"/>
</dbReference>
<dbReference type="Gene3D" id="1.10.8.420">
    <property type="entry name" value="RecR Domain 1"/>
    <property type="match status" value="1"/>
</dbReference>
<dbReference type="HAMAP" id="MF_00017">
    <property type="entry name" value="RecR"/>
    <property type="match status" value="1"/>
</dbReference>
<dbReference type="InterPro" id="IPR000093">
    <property type="entry name" value="DNA_Rcmb_RecR"/>
</dbReference>
<dbReference type="InterPro" id="IPR023627">
    <property type="entry name" value="Rcmb_RecR"/>
</dbReference>
<dbReference type="InterPro" id="IPR015967">
    <property type="entry name" value="Rcmb_RecR_Znf"/>
</dbReference>
<dbReference type="InterPro" id="IPR006171">
    <property type="entry name" value="TOPRIM_dom"/>
</dbReference>
<dbReference type="InterPro" id="IPR034137">
    <property type="entry name" value="TOPRIM_RecR"/>
</dbReference>
<dbReference type="NCBIfam" id="TIGR00615">
    <property type="entry name" value="recR"/>
    <property type="match status" value="1"/>
</dbReference>
<dbReference type="PANTHER" id="PTHR30446">
    <property type="entry name" value="RECOMBINATION PROTEIN RECR"/>
    <property type="match status" value="1"/>
</dbReference>
<dbReference type="PANTHER" id="PTHR30446:SF0">
    <property type="entry name" value="RECOMBINATION PROTEIN RECR"/>
    <property type="match status" value="1"/>
</dbReference>
<dbReference type="Pfam" id="PF21175">
    <property type="entry name" value="RecR_C"/>
    <property type="match status" value="1"/>
</dbReference>
<dbReference type="Pfam" id="PF21176">
    <property type="entry name" value="RecR_HhH"/>
    <property type="match status" value="1"/>
</dbReference>
<dbReference type="Pfam" id="PF02132">
    <property type="entry name" value="RecR_ZnF"/>
    <property type="match status" value="1"/>
</dbReference>
<dbReference type="Pfam" id="PF13662">
    <property type="entry name" value="Toprim_4"/>
    <property type="match status" value="1"/>
</dbReference>
<dbReference type="SUPFAM" id="SSF111304">
    <property type="entry name" value="Recombination protein RecR"/>
    <property type="match status" value="1"/>
</dbReference>
<dbReference type="PROSITE" id="PS01300">
    <property type="entry name" value="RECR"/>
    <property type="match status" value="1"/>
</dbReference>
<dbReference type="PROSITE" id="PS50880">
    <property type="entry name" value="TOPRIM"/>
    <property type="match status" value="1"/>
</dbReference>
<name>RECR_NITV9</name>
<reference key="1">
    <citation type="submission" date="2008-10" db="EMBL/GenBank/DDBJ databases">
        <title>Complete sequence of Desulfovibrio vulgaris str. 'Miyazaki F'.</title>
        <authorList>
            <person name="Lucas S."/>
            <person name="Copeland A."/>
            <person name="Lapidus A."/>
            <person name="Glavina del Rio T."/>
            <person name="Dalin E."/>
            <person name="Tice H."/>
            <person name="Bruce D."/>
            <person name="Goodwin L."/>
            <person name="Pitluck S."/>
            <person name="Sims D."/>
            <person name="Brettin T."/>
            <person name="Detter J.C."/>
            <person name="Han C."/>
            <person name="Larimer F."/>
            <person name="Land M."/>
            <person name="Hauser L."/>
            <person name="Kyrpides N."/>
            <person name="Mikhailova N."/>
            <person name="Hazen T.C."/>
            <person name="Richardson P."/>
        </authorList>
    </citation>
    <scope>NUCLEOTIDE SEQUENCE [LARGE SCALE GENOMIC DNA]</scope>
    <source>
        <strain>DSM 19637 / Miyazaki F</strain>
    </source>
</reference>
<proteinExistence type="inferred from homology"/>
<comment type="function">
    <text evidence="1">May play a role in DNA repair. It seems to be involved in an RecBC-independent recombinational process of DNA repair. It may act with RecF and RecO.</text>
</comment>
<comment type="similarity">
    <text evidence="1">Belongs to the RecR family.</text>
</comment>
<gene>
    <name evidence="1" type="primary">recR</name>
    <name type="ordered locus">DvMF_2271</name>
</gene>
<sequence>MQRLPEPLKALVEQLSRLPGLGPKSALRLAMTLLKWPASETRRLGRAVHDLRDNLHLCGRCGALTDVDPCGICTDPARSGETLCLVSEWDSLLTLEEGGFYKGQYLILGGLLAPLDNLHADSLELDRLTKRMAEGTVREVVMALGTTVEAENTATYIRNMIVRQYPQVRVTRLAQGIPLGSEVKFMDRETLRQSMQYRQDL</sequence>
<protein>
    <recommendedName>
        <fullName evidence="1">Recombination protein RecR</fullName>
    </recommendedName>
</protein>
<accession>B8DQU5</accession>
<organism>
    <name type="scientific">Nitratidesulfovibrio vulgaris (strain DSM 19637 / Miyazaki F)</name>
    <name type="common">Desulfovibrio vulgaris</name>
    <dbReference type="NCBI Taxonomy" id="883"/>
    <lineage>
        <taxon>Bacteria</taxon>
        <taxon>Pseudomonadati</taxon>
        <taxon>Thermodesulfobacteriota</taxon>
        <taxon>Desulfovibrionia</taxon>
        <taxon>Desulfovibrionales</taxon>
        <taxon>Desulfovibrionaceae</taxon>
        <taxon>Nitratidesulfovibrio</taxon>
    </lineage>
</organism>